<name>THOC2_HUMAN</name>
<gene>
    <name type="primary">THOC2</name>
    <name type="synonym">CXorf3</name>
</gene>
<accession>Q8NI27</accession>
<accession>A6NM50</accession>
<accession>Q5JZ12</accession>
<accession>Q6IN92</accession>
<accession>Q9H8I6</accession>
<feature type="chain" id="PRO_0000072523" description="THO complex subunit 2">
    <location>
        <begin position="1"/>
        <end position="1593"/>
    </location>
</feature>
<feature type="region of interest" description="Anchor domain; interaction with THOC5 and THOC7" evidence="16 23">
    <location>
        <begin position="1"/>
        <end position="163"/>
    </location>
</feature>
<feature type="region of interest" description="Bow domain; interaction with THOC1 dock domain and THOC3" evidence="16 23">
    <location>
        <begin position="164"/>
        <end position="534"/>
    </location>
</feature>
<feature type="region of interest" description="Disordered" evidence="3">
    <location>
        <begin position="322"/>
        <end position="341"/>
    </location>
</feature>
<feature type="region of interest" description="MIF4G domain; interaction with THOC3 and DDX39B" evidence="16 23">
    <location>
        <begin position="535"/>
        <end position="686"/>
    </location>
</feature>
<feature type="region of interest" description="Stern domain" evidence="16">
    <location>
        <begin position="687"/>
        <end position="1174"/>
    </location>
</feature>
<feature type="region of interest" description="Charged domain" evidence="16">
    <location>
        <begin position="1175"/>
        <end position="1593"/>
    </location>
</feature>
<feature type="region of interest" description="Disordered" evidence="3">
    <location>
        <begin position="1184"/>
        <end position="1593"/>
    </location>
</feature>
<feature type="coiled-coil region" evidence="2">
    <location>
        <begin position="896"/>
        <end position="965"/>
    </location>
</feature>
<feature type="short sequence motif" description="Nuclear localization signal" evidence="2">
    <location>
        <begin position="923"/>
        <end position="928"/>
    </location>
</feature>
<feature type="compositionally biased region" description="Basic and acidic residues" evidence="3">
    <location>
        <begin position="1218"/>
        <end position="1234"/>
    </location>
</feature>
<feature type="compositionally biased region" description="Low complexity" evidence="3">
    <location>
        <begin position="1251"/>
        <end position="1263"/>
    </location>
</feature>
<feature type="compositionally biased region" description="Basic and acidic residues" evidence="3">
    <location>
        <begin position="1265"/>
        <end position="1285"/>
    </location>
</feature>
<feature type="compositionally biased region" description="Basic and acidic residues" evidence="3">
    <location>
        <begin position="1294"/>
        <end position="1343"/>
    </location>
</feature>
<feature type="compositionally biased region" description="Basic and acidic residues" evidence="3">
    <location>
        <begin position="1353"/>
        <end position="1383"/>
    </location>
</feature>
<feature type="compositionally biased region" description="Polar residues" evidence="3">
    <location>
        <begin position="1416"/>
        <end position="1425"/>
    </location>
</feature>
<feature type="compositionally biased region" description="Basic and acidic residues" evidence="3">
    <location>
        <begin position="1449"/>
        <end position="1504"/>
    </location>
</feature>
<feature type="compositionally biased region" description="Basic and acidic residues" evidence="3">
    <location>
        <begin position="1524"/>
        <end position="1582"/>
    </location>
</feature>
<feature type="compositionally biased region" description="Basic residues" evidence="3">
    <location>
        <begin position="1583"/>
        <end position="1593"/>
    </location>
</feature>
<feature type="modified residue" description="Phosphoserine" evidence="1">
    <location>
        <position position="1222"/>
    </location>
</feature>
<feature type="modified residue" description="Phosphothreonine" evidence="27 28 30">
    <location>
        <position position="1385"/>
    </location>
</feature>
<feature type="modified residue" description="Phosphoserine" evidence="30">
    <location>
        <position position="1390"/>
    </location>
</feature>
<feature type="modified residue" description="Phosphoserine" evidence="27 28 30">
    <location>
        <position position="1393"/>
    </location>
</feature>
<feature type="modified residue" description="Phosphoserine" evidence="27 28 29 30 31">
    <location>
        <position position="1417"/>
    </location>
</feature>
<feature type="modified residue" description="Phosphothreonine" evidence="27 30">
    <location>
        <position position="1443"/>
    </location>
</feature>
<feature type="modified residue" description="Phosphoserine" evidence="30">
    <location>
        <position position="1450"/>
    </location>
</feature>
<feature type="modified residue" description="Phosphoserine" evidence="26 27 29 30">
    <location>
        <position position="1486"/>
    </location>
</feature>
<feature type="modified residue" description="Phosphoserine" evidence="30">
    <location>
        <position position="1516"/>
    </location>
</feature>
<feature type="splice variant" id="VSP_008588" description="In isoform 2." evidence="20">
    <location>
        <begin position="1"/>
        <end position="1179"/>
    </location>
</feature>
<feature type="sequence variant" id="VAR_090062" description="In MRXSK; likely pathogenic; decreased protein abundance." evidence="14 15">
    <original>R</original>
    <variation>C</variation>
    <location>
        <position position="77"/>
    </location>
</feature>
<feature type="sequence variant" id="VAR_075718" description="In MRXSK; uncertain significance; dbSNP:rs797045019." evidence="13">
    <original>L</original>
    <variation>F</variation>
    <location>
        <position position="313"/>
    </location>
</feature>
<feature type="sequence variant" id="VAR_075719" description="In MRXSK; uncertain significance; reduced amounts of protein; reduced amounts of other THO complex subunits; the mutant protein has a significantly shorter half-life; dbSNP:rs797045018." evidence="13">
    <original>L</original>
    <variation>P</variation>
    <location>
        <position position="438"/>
    </location>
</feature>
<feature type="sequence variant" id="VAR_090063" description="In MRXSK; likely pathogenic; decreased protein abundance; the mutant protein has a shorter half-life; does not affect nuclear and cytoplasmic localization." evidence="14">
    <original>Y</original>
    <variation>C</variation>
    <location>
        <position position="517"/>
    </location>
</feature>
<feature type="sequence variant" id="VAR_090064" description="In MRXSK; uncertain significance; decreased protein abundance." evidence="15">
    <original>N</original>
    <variation>D</variation>
    <location>
        <position position="666"/>
    </location>
</feature>
<feature type="sequence variant" id="VAR_090065" description="In MRXSK; uncertain significance; decreased protein abundance; does not affect nuclear and cytoplasmic localization." evidence="14">
    <original>T</original>
    <variation>I</variation>
    <location>
        <position position="696"/>
    </location>
</feature>
<feature type="sequence variant" id="VAR_090066" description="In MRXSK; uncertain significance; decreased protein abundance; does not affect nuclear and cytoplasmic localization." evidence="14">
    <original>G</original>
    <variation>D</variation>
    <location>
        <position position="713"/>
    </location>
</feature>
<feature type="sequence variant" id="VAR_090067" description="In MRXSK; likely pathogenic." evidence="15">
    <original>K</original>
    <variation>E</variation>
    <location>
        <position position="724"/>
    </location>
</feature>
<feature type="sequence variant" id="VAR_075720" description="In MRXSK; uncertain significance; reduced amounts of mutant protein; reduced amounts of other THO complex subunits; the mutant protein has a significantly shorter half-life; dbSNP:rs797045021." evidence="13">
    <original>I</original>
    <variation>T</variation>
    <location>
        <position position="800"/>
    </location>
</feature>
<feature type="sequence variant" id="VAR_090068" description="In MRXSK; likely pathogenic; decreased protein abundance." evidence="15">
    <original>Y</original>
    <variation>C</variation>
    <location>
        <position position="881"/>
    </location>
</feature>
<feature type="sequence variant" id="VAR_090069" description="In MRXSK; uncertain significance." evidence="15">
    <original>C</original>
    <variation>Y</variation>
    <location>
        <position position="981"/>
    </location>
</feature>
<feature type="sequence variant" id="VAR_075721" description="In MRXSK; uncertain significance; normal amounts of mutant protein; normal amounts of other THO complex subunits; dbSNP:rs797045020." evidence="13">
    <original>S</original>
    <variation>P</variation>
    <location>
        <position position="1012"/>
    </location>
</feature>
<feature type="sequence variant" id="VAR_090070" description="In MRXSK; uncertain significance." evidence="15">
    <original>R</original>
    <variation>W</variation>
    <location>
        <position position="1075"/>
    </location>
</feature>
<feature type="sequence variant" id="VAR_090071" description="In MRXSK; uncertain significance." evidence="15">
    <original>W</original>
    <variation>C</variation>
    <location>
        <position position="1100"/>
    </location>
</feature>
<feature type="sequence variant" id="VAR_090072" description="In MRXSK; uncertain significance; does not affect nuclear and cytoplasmic localization." evidence="14">
    <original>S</original>
    <variation>L</variation>
    <location>
        <position position="1108"/>
    </location>
</feature>
<feature type="sequence variant" id="VAR_090073" description="In MRXSK; uncertain significance." evidence="14">
    <original>R</original>
    <variation>G</variation>
    <location>
        <position position="1121"/>
    </location>
</feature>
<feature type="sequence variant" id="VAR_090074" description="In MRXSK; uncertain significance; decreased protein abundance; does not affect nuclear and cytoplasmic localization." evidence="14">
    <original>H</original>
    <variation>Y</variation>
    <location>
        <position position="1187"/>
    </location>
</feature>
<feature type="sequence variant" id="VAR_090075" description="In MRXSK; uncertain significance; does not affect nuclear and cytoplasmic localization." evidence="14">
    <original>N</original>
    <variation>H</variation>
    <location>
        <position position="1261"/>
    </location>
</feature>
<feature type="sequence variant" id="VAR_090076" description="In MRXSK; uncertain significance." evidence="15">
    <original>K</original>
    <variation>R</variation>
    <location>
        <position position="1549"/>
    </location>
</feature>
<feature type="mutagenesis site" description="Impairs interaction with DDX39B. Abolishes interaction with DDX39B; when associated with 589-A--A-592." evidence="16">
    <original>YIMKRLTK</original>
    <variation>AIMSSLTS</variation>
    <location>
        <begin position="551"/>
        <end position="558"/>
    </location>
</feature>
<feature type="mutagenesis site" description="Impairs interaction with DDX39B. Abolishes interaction with DDX39B; when associated with 551-A--S-558." evidence="16">
    <original>KYDN</original>
    <variation>ASDA</variation>
    <location>
        <begin position="589"/>
        <end position="592"/>
    </location>
</feature>
<feature type="sequence conflict" description="In Ref. 4; BAB14630." evidence="22" ref="4">
    <original>F</original>
    <variation>S</variation>
    <location>
        <position position="807"/>
    </location>
</feature>
<feature type="sequence conflict" description="In Ref. 5; CAE46196." evidence="22" ref="5">
    <original>E</original>
    <variation>G</variation>
    <location>
        <position position="1276"/>
    </location>
</feature>
<feature type="sequence conflict" description="In Ref. 5; CAE46196." evidence="22" ref="5">
    <original>E</original>
    <variation>K</variation>
    <location>
        <position position="1356"/>
    </location>
</feature>
<feature type="sequence conflict" description="In Ref. 5; CAE46196." evidence="22" ref="5">
    <original>DSLI</original>
    <variation>VSIA</variation>
    <location>
        <begin position="1426"/>
        <end position="1429"/>
    </location>
</feature>
<feature type="helix" evidence="33">
    <location>
        <begin position="15"/>
        <end position="22"/>
    </location>
</feature>
<feature type="helix" evidence="33">
    <location>
        <begin position="40"/>
        <end position="56"/>
    </location>
</feature>
<feature type="helix" evidence="33">
    <location>
        <begin position="73"/>
        <end position="79"/>
    </location>
</feature>
<feature type="helix" evidence="33">
    <location>
        <begin position="84"/>
        <end position="99"/>
    </location>
</feature>
<feature type="helix" evidence="33">
    <location>
        <begin position="108"/>
        <end position="118"/>
    </location>
</feature>
<feature type="helix" evidence="33">
    <location>
        <begin position="143"/>
        <end position="155"/>
    </location>
</feature>
<feature type="strand" evidence="33">
    <location>
        <begin position="164"/>
        <end position="168"/>
    </location>
</feature>
<feature type="helix" evidence="32">
    <location>
        <begin position="169"/>
        <end position="179"/>
    </location>
</feature>
<feature type="helix" evidence="32">
    <location>
        <begin position="189"/>
        <end position="203"/>
    </location>
</feature>
<feature type="helix" evidence="32">
    <location>
        <begin position="207"/>
        <end position="220"/>
    </location>
</feature>
<feature type="helix" evidence="32">
    <location>
        <begin position="225"/>
        <end position="236"/>
    </location>
</feature>
<feature type="helix" evidence="32">
    <location>
        <begin position="242"/>
        <end position="254"/>
    </location>
</feature>
<feature type="helix" evidence="32">
    <location>
        <begin position="264"/>
        <end position="273"/>
    </location>
</feature>
<feature type="strand" evidence="32">
    <location>
        <begin position="276"/>
        <end position="278"/>
    </location>
</feature>
<feature type="helix" evidence="32">
    <location>
        <begin position="282"/>
        <end position="287"/>
    </location>
</feature>
<feature type="strand" evidence="33">
    <location>
        <begin position="288"/>
        <end position="290"/>
    </location>
</feature>
<feature type="turn" evidence="33">
    <location>
        <begin position="291"/>
        <end position="293"/>
    </location>
</feature>
<feature type="helix" evidence="32">
    <location>
        <begin position="296"/>
        <end position="306"/>
    </location>
</feature>
<feature type="helix" evidence="32">
    <location>
        <begin position="344"/>
        <end position="352"/>
    </location>
</feature>
<feature type="turn" evidence="33">
    <location>
        <begin position="353"/>
        <end position="356"/>
    </location>
</feature>
<feature type="helix" evidence="32">
    <location>
        <begin position="359"/>
        <end position="365"/>
    </location>
</feature>
<feature type="turn" evidence="32">
    <location>
        <begin position="370"/>
        <end position="375"/>
    </location>
</feature>
<feature type="helix" evidence="32">
    <location>
        <begin position="377"/>
        <end position="390"/>
    </location>
</feature>
<feature type="helix" evidence="32">
    <location>
        <begin position="392"/>
        <end position="397"/>
    </location>
</feature>
<feature type="helix" evidence="32">
    <location>
        <begin position="425"/>
        <end position="438"/>
    </location>
</feature>
<feature type="helix" evidence="33">
    <location>
        <begin position="442"/>
        <end position="444"/>
    </location>
</feature>
<feature type="helix" evidence="32">
    <location>
        <begin position="446"/>
        <end position="462"/>
    </location>
</feature>
<feature type="helix" evidence="32">
    <location>
        <begin position="477"/>
        <end position="496"/>
    </location>
</feature>
<feature type="strand" evidence="32">
    <location>
        <begin position="498"/>
        <end position="500"/>
    </location>
</feature>
<feature type="helix" evidence="32">
    <location>
        <begin position="504"/>
        <end position="512"/>
    </location>
</feature>
<feature type="helix" evidence="32">
    <location>
        <begin position="518"/>
        <end position="525"/>
    </location>
</feature>
<feature type="turn" evidence="32">
    <location>
        <begin position="526"/>
        <end position="530"/>
    </location>
</feature>
<feature type="strand" evidence="32">
    <location>
        <begin position="531"/>
        <end position="535"/>
    </location>
</feature>
<feature type="helix" evidence="32">
    <location>
        <begin position="536"/>
        <end position="553"/>
    </location>
</feature>
<feature type="helix" evidence="32">
    <location>
        <begin position="564"/>
        <end position="574"/>
    </location>
</feature>
<feature type="helix" evidence="32">
    <location>
        <begin position="576"/>
        <end position="589"/>
    </location>
</feature>
<feature type="strand" evidence="33">
    <location>
        <begin position="591"/>
        <end position="593"/>
    </location>
</feature>
<feature type="helix" evidence="32">
    <location>
        <begin position="594"/>
        <end position="600"/>
    </location>
</feature>
<feature type="helix" evidence="32">
    <location>
        <begin position="601"/>
        <end position="603"/>
    </location>
</feature>
<feature type="helix" evidence="32">
    <location>
        <begin position="607"/>
        <end position="619"/>
    </location>
</feature>
<feature type="helix" evidence="32">
    <location>
        <begin position="637"/>
        <end position="652"/>
    </location>
</feature>
<feature type="helix" evidence="32">
    <location>
        <begin position="658"/>
        <end position="669"/>
    </location>
</feature>
<feature type="helix" evidence="32">
    <location>
        <begin position="674"/>
        <end position="686"/>
    </location>
</feature>
<feature type="helix" evidence="32">
    <location>
        <begin position="697"/>
        <end position="700"/>
    </location>
</feature>
<feature type="helix" evidence="32">
    <location>
        <begin position="707"/>
        <end position="713"/>
    </location>
</feature>
<feature type="helix" evidence="32">
    <location>
        <begin position="724"/>
        <end position="732"/>
    </location>
</feature>
<feature type="helix" evidence="32">
    <location>
        <begin position="741"/>
        <end position="748"/>
    </location>
</feature>
<feature type="helix" evidence="32">
    <location>
        <begin position="754"/>
        <end position="756"/>
    </location>
</feature>
<feature type="helix" evidence="32">
    <location>
        <begin position="764"/>
        <end position="785"/>
    </location>
</feature>
<feature type="helix" evidence="33">
    <location>
        <begin position="790"/>
        <end position="796"/>
    </location>
</feature>
<feature type="helix" evidence="33">
    <location>
        <begin position="800"/>
        <end position="806"/>
    </location>
</feature>
<feature type="helix" evidence="33">
    <location>
        <begin position="811"/>
        <end position="822"/>
    </location>
</feature>
<feature type="helix" evidence="32">
    <location>
        <begin position="857"/>
        <end position="866"/>
    </location>
</feature>
<feature type="helix" evidence="32">
    <location>
        <begin position="873"/>
        <end position="883"/>
    </location>
</feature>
<feature type="helix" evidence="32">
    <location>
        <begin position="890"/>
        <end position="892"/>
    </location>
</feature>
<feature type="helix" evidence="32">
    <location>
        <begin position="897"/>
        <end position="907"/>
    </location>
</feature>
<feature type="helix" evidence="32">
    <location>
        <begin position="928"/>
        <end position="958"/>
    </location>
</feature>
<feature type="helix" evidence="32">
    <location>
        <begin position="972"/>
        <end position="987"/>
    </location>
</feature>
<feature type="helix" evidence="32">
    <location>
        <begin position="992"/>
        <end position="1004"/>
    </location>
</feature>
<feature type="helix" evidence="32">
    <location>
        <begin position="1016"/>
        <end position="1020"/>
    </location>
</feature>
<feature type="helix" evidence="32">
    <location>
        <begin position="1025"/>
        <end position="1029"/>
    </location>
</feature>
<feature type="helix" evidence="32">
    <location>
        <begin position="1035"/>
        <end position="1053"/>
    </location>
</feature>
<feature type="helix" evidence="32">
    <location>
        <begin position="1088"/>
        <end position="1112"/>
    </location>
</feature>
<feature type="strand" evidence="33">
    <location>
        <begin position="1113"/>
        <end position="1115"/>
    </location>
</feature>
<feature type="helix" evidence="32">
    <location>
        <begin position="1119"/>
        <end position="1130"/>
    </location>
</feature>
<feature type="helix" evidence="32">
    <location>
        <begin position="1138"/>
        <end position="1153"/>
    </location>
</feature>
<feature type="helix" evidence="32">
    <location>
        <begin position="1161"/>
        <end position="1174"/>
    </location>
</feature>
<sequence>MAAAAVVVPAEWIKNWEKSGRGEFLHLCRILSENKSHDSSTYRDFQQALYELSYHVIKGNLKHEQASNVLSDISEFREDMPSILADVFCILDIETNCLEEKSKRDYFTQLVLACLYLVSDTVLKERLDPETLESLGLIKQSQQFNQKSVKIKTKLFYKQQKFNLLREENEGYAKLIAELGQDLSGSITSDLILENIKSLIGCFNLDPNRVLDVILEVFECRPEHDDFFISLLESYMSMCEPQTLCHILGFKFKFYQEPNGETPSSLYRVAAVLLQFNLIDLDDLYVHLLPADNCIMDEHKREIAEAKQIVRKLTMVVLSSEKMDEREKEKEKEEEKVEKPPDNQKLGLLEALLKIGDWQHAQNIMDQMPPYYAASHKLIALAICKLIHITIEPLYRRVGVPKGAKGSPVNALQNKRAPKQAESFEDLRRDVFNMFCYLGPHLSHDPILFAKVVRIGKSFMKEFQSDGSKQEDKEKTEVILSCLLSITDQVLLPSLSLMDCNACMSEELWGMFKTFPYQHRYRLYGQWKNETYNSHPLLVKVKAQTIDRAKYIMKRLTKENVKPSGRQIGKLSHSNPTILFDYILSQIQKYDNLITPVVDSLKYLTSLNYDVLAYCIIEALANPEKERMKHDDTTISSWLQSLASFCGAVFRKYPIDLAGLLQYVANQLKAGKSFDLLILKEVVQKMAGIEITEEMTMEQLEAMTGGEQLKAEGGYFGQIRNTKKSSQRLKDALLDHDLALPLCLLMAQQRNGVIFQEGGEKHLKLVGKLYDQCHDTLVQFGGFLASNLSTEDYIKRVPSIDVLCNEFHTPHDAAFFLSRPMYAHHISSKYDELKKSEKGSKQQHKVHKYITSCEMVMAPVHEAVVSLHVSKVWDDISPQFYATFWSLTMYDLAVPHTSYEREVNKLKVQMKAIDDNQEMPPNKKKKEKERCTALQDKLLEEEKKQMEHVQRVLQRLKLEKDNWLLAKSTKNETITKFLQLCIFPRCIFSAIDAVYCARFVELVHQQKTPNFSTLLCYDRVFSDIIYTVASCTENEASRYGRFLCCMLETVTRWHSDRATYEKECGNYPGFLTILRATGFDGGNKADQLDYENFRHVVHKWHYKLTKASVHCLETGEYTHIRNILIVLTKILPWYPKVLNLGQALERRVHKICQEEKEKRPDLYALAMGYSGQLKSRKSYMIPENEFHHKDPPPRNAVASVQNGPGGGPSSSSIGSASKSDESSTEETDKSRERSQCGVKAVNKASSTTPKGNSSNGNSGSNSNKAVKENDKEKGKEKEKEKKEKTPATTPEARVLGKDGKEKPKEERPNKDEKARETKERTPKSDKEKEKFKKEEKAKDEKFKTTVPNAESKSTQEREREKEPSRERDIAKEMKSKENVKGGEKTPVSGSLKSPVPRSDIPEPEREQKRRKIDTHPSPSHSSTVKDSLIELKESSAKLYINHTPPPLSKSKEREMDKKDLDKSRERSREREKKDEKDRKERKRDHSNNDREVPPDLTKRRKEENGTMGVSKHKSESPCESPYPNEKDKEKNKSKSSGKEKGSDSFKSEKMDKISSGGKKESRHDKEKIEKKEKRDSSGGKEEKKHHKSSDKHR</sequence>
<organism>
    <name type="scientific">Homo sapiens</name>
    <name type="common">Human</name>
    <dbReference type="NCBI Taxonomy" id="9606"/>
    <lineage>
        <taxon>Eukaryota</taxon>
        <taxon>Metazoa</taxon>
        <taxon>Chordata</taxon>
        <taxon>Craniata</taxon>
        <taxon>Vertebrata</taxon>
        <taxon>Euteleostomi</taxon>
        <taxon>Mammalia</taxon>
        <taxon>Eutheria</taxon>
        <taxon>Euarchontoglires</taxon>
        <taxon>Primates</taxon>
        <taxon>Haplorrhini</taxon>
        <taxon>Catarrhini</taxon>
        <taxon>Hominidae</taxon>
        <taxon>Homo</taxon>
    </lineage>
</organism>
<keyword id="KW-0002">3D-structure</keyword>
<keyword id="KW-0025">Alternative splicing</keyword>
<keyword id="KW-0175">Coiled coil</keyword>
<keyword id="KW-0963">Cytoplasm</keyword>
<keyword id="KW-0225">Disease variant</keyword>
<keyword id="KW-0991">Intellectual disability</keyword>
<keyword id="KW-0507">mRNA processing</keyword>
<keyword id="KW-0508">mRNA splicing</keyword>
<keyword id="KW-0509">mRNA transport</keyword>
<keyword id="KW-0539">Nucleus</keyword>
<keyword id="KW-0597">Phosphoprotein</keyword>
<keyword id="KW-1267">Proteomics identification</keyword>
<keyword id="KW-1185">Reference proteome</keyword>
<keyword id="KW-0694">RNA-binding</keyword>
<keyword id="KW-0813">Transport</keyword>
<dbReference type="EMBL" id="AL030996">
    <property type="protein sequence ID" value="CAI42271.2"/>
    <property type="molecule type" value="Genomic_DNA"/>
</dbReference>
<dbReference type="EMBL" id="AL023575">
    <property type="protein sequence ID" value="CAI42271.2"/>
    <property type="status" value="JOINED"/>
    <property type="molecule type" value="Genomic_DNA"/>
</dbReference>
<dbReference type="EMBL" id="Z82901">
    <property type="protein sequence ID" value="CAI42271.2"/>
    <property type="status" value="JOINED"/>
    <property type="molecule type" value="Genomic_DNA"/>
</dbReference>
<dbReference type="EMBL" id="Z82901">
    <property type="protein sequence ID" value="CAI42864.2"/>
    <property type="molecule type" value="Genomic_DNA"/>
</dbReference>
<dbReference type="EMBL" id="AL023575">
    <property type="protein sequence ID" value="CAI42864.2"/>
    <property type="status" value="JOINED"/>
    <property type="molecule type" value="Genomic_DNA"/>
</dbReference>
<dbReference type="EMBL" id="AL030996">
    <property type="protein sequence ID" value="CAI42864.2"/>
    <property type="status" value="JOINED"/>
    <property type="molecule type" value="Genomic_DNA"/>
</dbReference>
<dbReference type="EMBL" id="AL023575">
    <property type="protein sequence ID" value="CAO03594.1"/>
    <property type="molecule type" value="Genomic_DNA"/>
</dbReference>
<dbReference type="EMBL" id="AL030996">
    <property type="protein sequence ID" value="CAO03594.1"/>
    <property type="status" value="JOINED"/>
    <property type="molecule type" value="Genomic_DNA"/>
</dbReference>
<dbReference type="EMBL" id="Z82901">
    <property type="protein sequence ID" value="CAO03594.1"/>
    <property type="status" value="JOINED"/>
    <property type="molecule type" value="Genomic_DNA"/>
</dbReference>
<dbReference type="EMBL" id="BC072400">
    <property type="protein sequence ID" value="AAH72400.1"/>
    <property type="molecule type" value="mRNA"/>
</dbReference>
<dbReference type="EMBL" id="AF441770">
    <property type="protein sequence ID" value="AAM28436.1"/>
    <property type="status" value="ALT_SEQ"/>
    <property type="molecule type" value="mRNA"/>
</dbReference>
<dbReference type="EMBL" id="AK023659">
    <property type="protein sequence ID" value="BAB14630.1"/>
    <property type="status" value="ALT_INIT"/>
    <property type="molecule type" value="mRNA"/>
</dbReference>
<dbReference type="EMBL" id="BX648654">
    <property type="protein sequence ID" value="CAE46196.1"/>
    <property type="molecule type" value="mRNA"/>
</dbReference>
<dbReference type="CCDS" id="CCDS43988.1">
    <molecule id="Q8NI27-1"/>
</dbReference>
<dbReference type="RefSeq" id="NP_001075019.1">
    <molecule id="Q8NI27-1"/>
    <property type="nucleotide sequence ID" value="NM_001081550.2"/>
</dbReference>
<dbReference type="RefSeq" id="XP_047298232.1">
    <molecule id="Q8NI27-1"/>
    <property type="nucleotide sequence ID" value="XM_047442276.1"/>
</dbReference>
<dbReference type="RefSeq" id="XP_054183406.1">
    <molecule id="Q8NI27-1"/>
    <property type="nucleotide sequence ID" value="XM_054327431.1"/>
</dbReference>
<dbReference type="PDB" id="7APK">
    <property type="method" value="EM"/>
    <property type="resolution" value="3.30 A"/>
    <property type="chains" value="B/J/b/j=1-1203"/>
</dbReference>
<dbReference type="PDB" id="7ZNK">
    <property type="method" value="EM"/>
    <property type="resolution" value="3.90 A"/>
    <property type="chains" value="B/J/b/j=1-1593"/>
</dbReference>
<dbReference type="PDB" id="7ZNL">
    <property type="method" value="EM"/>
    <property type="resolution" value="3.45 A"/>
    <property type="chains" value="B/J/b/j=1-1593"/>
</dbReference>
<dbReference type="PDBsum" id="7APK"/>
<dbReference type="PDBsum" id="7ZNK"/>
<dbReference type="PDBsum" id="7ZNL"/>
<dbReference type="EMDB" id="EMD-11857"/>
<dbReference type="EMDB" id="EMD-14804"/>
<dbReference type="EMDB" id="EMD-14808"/>
<dbReference type="SMR" id="Q8NI27"/>
<dbReference type="BioGRID" id="121436">
    <property type="interactions" value="208"/>
</dbReference>
<dbReference type="ComplexPortal" id="CPX-2488">
    <property type="entry name" value="TREX transcription-export complex, DX39B variant"/>
</dbReference>
<dbReference type="ComplexPortal" id="CPX-7261">
    <property type="entry name" value="TREX transcription-export complex, DX39A variant"/>
</dbReference>
<dbReference type="CORUM" id="Q8NI27"/>
<dbReference type="FunCoup" id="Q8NI27">
    <property type="interactions" value="3847"/>
</dbReference>
<dbReference type="IntAct" id="Q8NI27">
    <property type="interactions" value="106"/>
</dbReference>
<dbReference type="MINT" id="Q8NI27"/>
<dbReference type="STRING" id="9606.ENSP00000245838"/>
<dbReference type="TCDB" id="3.A.22.1.2">
    <property type="family name" value="the transcription-coupled trex/tap nuclear mrna export complex (trex) family"/>
</dbReference>
<dbReference type="GlyCosmos" id="Q8NI27">
    <property type="glycosylation" value="1 site, 1 glycan"/>
</dbReference>
<dbReference type="GlyGen" id="Q8NI27">
    <property type="glycosylation" value="4 sites, 1 O-linked glycan (4 sites)"/>
</dbReference>
<dbReference type="iPTMnet" id="Q8NI27"/>
<dbReference type="MetOSite" id="Q8NI27"/>
<dbReference type="PhosphoSitePlus" id="Q8NI27"/>
<dbReference type="SwissPalm" id="Q8NI27"/>
<dbReference type="BioMuta" id="THOC2"/>
<dbReference type="DMDM" id="259016155"/>
<dbReference type="jPOST" id="Q8NI27"/>
<dbReference type="MassIVE" id="Q8NI27"/>
<dbReference type="PaxDb" id="9606-ENSP00000245838"/>
<dbReference type="PeptideAtlas" id="Q8NI27"/>
<dbReference type="ProteomicsDB" id="73816">
    <molecule id="Q8NI27-1"/>
</dbReference>
<dbReference type="ProteomicsDB" id="73817">
    <molecule id="Q8NI27-2"/>
</dbReference>
<dbReference type="Pumba" id="Q8NI27"/>
<dbReference type="Antibodypedia" id="51559">
    <property type="antibodies" value="68 antibodies from 16 providers"/>
</dbReference>
<dbReference type="DNASU" id="57187"/>
<dbReference type="Ensembl" id="ENST00000245838.13">
    <molecule id="Q8NI27-1"/>
    <property type="protein sequence ID" value="ENSP00000245838.8"/>
    <property type="gene ID" value="ENSG00000125676.20"/>
</dbReference>
<dbReference type="Ensembl" id="ENST00000355725.8">
    <molecule id="Q8NI27-1"/>
    <property type="protein sequence ID" value="ENSP00000347959.4"/>
    <property type="gene ID" value="ENSG00000125676.20"/>
</dbReference>
<dbReference type="Ensembl" id="ENST00000618150.4">
    <molecule id="Q8NI27-2"/>
    <property type="protein sequence ID" value="ENSP00000480478.1"/>
    <property type="gene ID" value="ENSG00000125676.20"/>
</dbReference>
<dbReference type="GeneID" id="57187"/>
<dbReference type="KEGG" id="hsa:57187"/>
<dbReference type="MANE-Select" id="ENST00000245838.13">
    <property type="protein sequence ID" value="ENSP00000245838.8"/>
    <property type="RefSeq nucleotide sequence ID" value="NM_001081550.2"/>
    <property type="RefSeq protein sequence ID" value="NP_001075019.1"/>
</dbReference>
<dbReference type="UCSC" id="uc004etu.4">
    <molecule id="Q8NI27-1"/>
    <property type="organism name" value="human"/>
</dbReference>
<dbReference type="AGR" id="HGNC:19073"/>
<dbReference type="CTD" id="57187"/>
<dbReference type="DisGeNET" id="57187"/>
<dbReference type="GeneCards" id="THOC2"/>
<dbReference type="HGNC" id="HGNC:19073">
    <property type="gene designation" value="THOC2"/>
</dbReference>
<dbReference type="HPA" id="ENSG00000125676">
    <property type="expression patterns" value="Low tissue specificity"/>
</dbReference>
<dbReference type="MalaCards" id="THOC2"/>
<dbReference type="MIM" id="300395">
    <property type="type" value="gene"/>
</dbReference>
<dbReference type="MIM" id="300957">
    <property type="type" value="phenotype"/>
</dbReference>
<dbReference type="MIM" id="301127">
    <property type="type" value="phenotype"/>
</dbReference>
<dbReference type="neXtProt" id="NX_Q8NI27"/>
<dbReference type="OpenTargets" id="ENSG00000125676"/>
<dbReference type="Orphanet" id="457240">
    <property type="disease" value="X-linked intellectual disability-short stature-overweight syndrome"/>
</dbReference>
<dbReference type="PharmGKB" id="PA128395788"/>
<dbReference type="VEuPathDB" id="HostDB:ENSG00000125676"/>
<dbReference type="eggNOG" id="KOG1874">
    <property type="taxonomic scope" value="Eukaryota"/>
</dbReference>
<dbReference type="GeneTree" id="ENSGT00710000106792"/>
<dbReference type="HOGENOM" id="CLU_663841_0_0_1"/>
<dbReference type="InParanoid" id="Q8NI27"/>
<dbReference type="OrthoDB" id="29024at2759"/>
<dbReference type="PAN-GO" id="Q8NI27">
    <property type="GO annotations" value="3 GO annotations based on evolutionary models"/>
</dbReference>
<dbReference type="PhylomeDB" id="Q8NI27"/>
<dbReference type="TreeFam" id="TF313127"/>
<dbReference type="PathwayCommons" id="Q8NI27"/>
<dbReference type="Reactome" id="R-HSA-159236">
    <property type="pathway name" value="Transport of Mature mRNA derived from an Intron-Containing Transcript"/>
</dbReference>
<dbReference type="Reactome" id="R-HSA-72187">
    <property type="pathway name" value="mRNA 3'-end processing"/>
</dbReference>
<dbReference type="Reactome" id="R-HSA-73856">
    <property type="pathway name" value="RNA Polymerase II Transcription Termination"/>
</dbReference>
<dbReference type="SignaLink" id="Q8NI27"/>
<dbReference type="SIGNOR" id="Q8NI27"/>
<dbReference type="BioGRID-ORCS" id="57187">
    <property type="hits" value="439 hits in 795 CRISPR screens"/>
</dbReference>
<dbReference type="ChiTaRS" id="THOC2">
    <property type="organism name" value="human"/>
</dbReference>
<dbReference type="GeneWiki" id="THOC2"/>
<dbReference type="GenomeRNAi" id="57187"/>
<dbReference type="Pharos" id="Q8NI27">
    <property type="development level" value="Tbio"/>
</dbReference>
<dbReference type="PRO" id="PR:Q8NI27"/>
<dbReference type="Proteomes" id="UP000005640">
    <property type="component" value="Chromosome X"/>
</dbReference>
<dbReference type="RNAct" id="Q8NI27">
    <property type="molecule type" value="protein"/>
</dbReference>
<dbReference type="Bgee" id="ENSG00000125676">
    <property type="expression patterns" value="Expressed in secondary oocyte and 203 other cell types or tissues"/>
</dbReference>
<dbReference type="ExpressionAtlas" id="Q8NI27">
    <property type="expression patterns" value="baseline and differential"/>
</dbReference>
<dbReference type="GO" id="GO:0005737">
    <property type="term" value="C:cytoplasm"/>
    <property type="evidence" value="ECO:0000314"/>
    <property type="project" value="UniProtKB"/>
</dbReference>
<dbReference type="GO" id="GO:0016607">
    <property type="term" value="C:nuclear speck"/>
    <property type="evidence" value="ECO:0007669"/>
    <property type="project" value="UniProtKB-SubCell"/>
</dbReference>
<dbReference type="GO" id="GO:0005654">
    <property type="term" value="C:nucleoplasm"/>
    <property type="evidence" value="ECO:0000304"/>
    <property type="project" value="Reactome"/>
</dbReference>
<dbReference type="GO" id="GO:0005634">
    <property type="term" value="C:nucleus"/>
    <property type="evidence" value="ECO:0000314"/>
    <property type="project" value="UniProtKB"/>
</dbReference>
<dbReference type="GO" id="GO:0000347">
    <property type="term" value="C:THO complex"/>
    <property type="evidence" value="ECO:0000314"/>
    <property type="project" value="UniProtKB"/>
</dbReference>
<dbReference type="GO" id="GO:0000445">
    <property type="term" value="C:THO complex part of transcription export complex"/>
    <property type="evidence" value="ECO:0000314"/>
    <property type="project" value="UniProtKB"/>
</dbReference>
<dbReference type="GO" id="GO:0000346">
    <property type="term" value="C:transcription export complex"/>
    <property type="evidence" value="ECO:0000314"/>
    <property type="project" value="UniProtKB"/>
</dbReference>
<dbReference type="GO" id="GO:0003729">
    <property type="term" value="F:mRNA binding"/>
    <property type="evidence" value="ECO:0000318"/>
    <property type="project" value="GO_Central"/>
</dbReference>
<dbReference type="GO" id="GO:0001824">
    <property type="term" value="P:blastocyst development"/>
    <property type="evidence" value="ECO:0007669"/>
    <property type="project" value="Ensembl"/>
</dbReference>
<dbReference type="GO" id="GO:0000902">
    <property type="term" value="P:cell morphogenesis"/>
    <property type="evidence" value="ECO:0007669"/>
    <property type="project" value="Ensembl"/>
</dbReference>
<dbReference type="GO" id="GO:0048699">
    <property type="term" value="P:generation of neurons"/>
    <property type="evidence" value="ECO:0000315"/>
    <property type="project" value="UniProtKB"/>
</dbReference>
<dbReference type="GO" id="GO:0006406">
    <property type="term" value="P:mRNA export from nucleus"/>
    <property type="evidence" value="ECO:0000314"/>
    <property type="project" value="UniProtKB"/>
</dbReference>
<dbReference type="GO" id="GO:0006397">
    <property type="term" value="P:mRNA processing"/>
    <property type="evidence" value="ECO:0007669"/>
    <property type="project" value="UniProtKB-KW"/>
</dbReference>
<dbReference type="GO" id="GO:0010977">
    <property type="term" value="P:negative regulation of neuron projection development"/>
    <property type="evidence" value="ECO:0007669"/>
    <property type="project" value="Ensembl"/>
</dbReference>
<dbReference type="GO" id="GO:0048666">
    <property type="term" value="P:neuron development"/>
    <property type="evidence" value="ECO:0000315"/>
    <property type="project" value="UniProtKB"/>
</dbReference>
<dbReference type="GO" id="GO:0016973">
    <property type="term" value="P:poly(A)+ mRNA export from nucleus"/>
    <property type="evidence" value="ECO:0000314"/>
    <property type="project" value="UniProtKB"/>
</dbReference>
<dbReference type="GO" id="GO:0010468">
    <property type="term" value="P:regulation of gene expression"/>
    <property type="evidence" value="ECO:0007669"/>
    <property type="project" value="Ensembl"/>
</dbReference>
<dbReference type="GO" id="GO:0010793">
    <property type="term" value="P:regulation of mRNA export from nucleus"/>
    <property type="evidence" value="ECO:0007669"/>
    <property type="project" value="Ensembl"/>
</dbReference>
<dbReference type="GO" id="GO:0008380">
    <property type="term" value="P:RNA splicing"/>
    <property type="evidence" value="ECO:0007669"/>
    <property type="project" value="UniProtKB-KW"/>
</dbReference>
<dbReference type="GO" id="GO:0017145">
    <property type="term" value="P:stem cell division"/>
    <property type="evidence" value="ECO:0007669"/>
    <property type="project" value="Ensembl"/>
</dbReference>
<dbReference type="InterPro" id="IPR040007">
    <property type="entry name" value="Tho2"/>
</dbReference>
<dbReference type="InterPro" id="IPR021418">
    <property type="entry name" value="THO_THOC2_C"/>
</dbReference>
<dbReference type="InterPro" id="IPR021726">
    <property type="entry name" value="THO_THOC2_N"/>
</dbReference>
<dbReference type="InterPro" id="IPR032302">
    <property type="entry name" value="THOC2_N"/>
</dbReference>
<dbReference type="PANTHER" id="PTHR21597:SF0">
    <property type="entry name" value="THO COMPLEX SUBUNIT 2"/>
    <property type="match status" value="1"/>
</dbReference>
<dbReference type="PANTHER" id="PTHR21597">
    <property type="entry name" value="THO2 PROTEIN"/>
    <property type="match status" value="1"/>
</dbReference>
<dbReference type="Pfam" id="PF11262">
    <property type="entry name" value="Tho2"/>
    <property type="match status" value="1"/>
</dbReference>
<dbReference type="Pfam" id="PF11732">
    <property type="entry name" value="Thoc2"/>
    <property type="match status" value="1"/>
</dbReference>
<dbReference type="Pfam" id="PF16134">
    <property type="entry name" value="THOC2_N"/>
    <property type="match status" value="2"/>
</dbReference>
<reference key="1">
    <citation type="journal article" date="2005" name="Nature">
        <title>The DNA sequence of the human X chromosome.</title>
        <authorList>
            <person name="Ross M.T."/>
            <person name="Grafham D.V."/>
            <person name="Coffey A.J."/>
            <person name="Scherer S."/>
            <person name="McLay K."/>
            <person name="Muzny D."/>
            <person name="Platzer M."/>
            <person name="Howell G.R."/>
            <person name="Burrows C."/>
            <person name="Bird C.P."/>
            <person name="Frankish A."/>
            <person name="Lovell F.L."/>
            <person name="Howe K.L."/>
            <person name="Ashurst J.L."/>
            <person name="Fulton R.S."/>
            <person name="Sudbrak R."/>
            <person name="Wen G."/>
            <person name="Jones M.C."/>
            <person name="Hurles M.E."/>
            <person name="Andrews T.D."/>
            <person name="Scott C.E."/>
            <person name="Searle S."/>
            <person name="Ramser J."/>
            <person name="Whittaker A."/>
            <person name="Deadman R."/>
            <person name="Carter N.P."/>
            <person name="Hunt S.E."/>
            <person name="Chen R."/>
            <person name="Cree A."/>
            <person name="Gunaratne P."/>
            <person name="Havlak P."/>
            <person name="Hodgson A."/>
            <person name="Metzker M.L."/>
            <person name="Richards S."/>
            <person name="Scott G."/>
            <person name="Steffen D."/>
            <person name="Sodergren E."/>
            <person name="Wheeler D.A."/>
            <person name="Worley K.C."/>
            <person name="Ainscough R."/>
            <person name="Ambrose K.D."/>
            <person name="Ansari-Lari M.A."/>
            <person name="Aradhya S."/>
            <person name="Ashwell R.I."/>
            <person name="Babbage A.K."/>
            <person name="Bagguley C.L."/>
            <person name="Ballabio A."/>
            <person name="Banerjee R."/>
            <person name="Barker G.E."/>
            <person name="Barlow K.F."/>
            <person name="Barrett I.P."/>
            <person name="Bates K.N."/>
            <person name="Beare D.M."/>
            <person name="Beasley H."/>
            <person name="Beasley O."/>
            <person name="Beck A."/>
            <person name="Bethel G."/>
            <person name="Blechschmidt K."/>
            <person name="Brady N."/>
            <person name="Bray-Allen S."/>
            <person name="Bridgeman A.M."/>
            <person name="Brown A.J."/>
            <person name="Brown M.J."/>
            <person name="Bonnin D."/>
            <person name="Bruford E.A."/>
            <person name="Buhay C."/>
            <person name="Burch P."/>
            <person name="Burford D."/>
            <person name="Burgess J."/>
            <person name="Burrill W."/>
            <person name="Burton J."/>
            <person name="Bye J.M."/>
            <person name="Carder C."/>
            <person name="Carrel L."/>
            <person name="Chako J."/>
            <person name="Chapman J.C."/>
            <person name="Chavez D."/>
            <person name="Chen E."/>
            <person name="Chen G."/>
            <person name="Chen Y."/>
            <person name="Chen Z."/>
            <person name="Chinault C."/>
            <person name="Ciccodicola A."/>
            <person name="Clark S.Y."/>
            <person name="Clarke G."/>
            <person name="Clee C.M."/>
            <person name="Clegg S."/>
            <person name="Clerc-Blankenburg K."/>
            <person name="Clifford K."/>
            <person name="Cobley V."/>
            <person name="Cole C.G."/>
            <person name="Conquer J.S."/>
            <person name="Corby N."/>
            <person name="Connor R.E."/>
            <person name="David R."/>
            <person name="Davies J."/>
            <person name="Davis C."/>
            <person name="Davis J."/>
            <person name="Delgado O."/>
            <person name="Deshazo D."/>
            <person name="Dhami P."/>
            <person name="Ding Y."/>
            <person name="Dinh H."/>
            <person name="Dodsworth S."/>
            <person name="Draper H."/>
            <person name="Dugan-Rocha S."/>
            <person name="Dunham A."/>
            <person name="Dunn M."/>
            <person name="Durbin K.J."/>
            <person name="Dutta I."/>
            <person name="Eades T."/>
            <person name="Ellwood M."/>
            <person name="Emery-Cohen A."/>
            <person name="Errington H."/>
            <person name="Evans K.L."/>
            <person name="Faulkner L."/>
            <person name="Francis F."/>
            <person name="Frankland J."/>
            <person name="Fraser A.E."/>
            <person name="Galgoczy P."/>
            <person name="Gilbert J."/>
            <person name="Gill R."/>
            <person name="Gloeckner G."/>
            <person name="Gregory S.G."/>
            <person name="Gribble S."/>
            <person name="Griffiths C."/>
            <person name="Grocock R."/>
            <person name="Gu Y."/>
            <person name="Gwilliam R."/>
            <person name="Hamilton C."/>
            <person name="Hart E.A."/>
            <person name="Hawes A."/>
            <person name="Heath P.D."/>
            <person name="Heitmann K."/>
            <person name="Hennig S."/>
            <person name="Hernandez J."/>
            <person name="Hinzmann B."/>
            <person name="Ho S."/>
            <person name="Hoffs M."/>
            <person name="Howden P.J."/>
            <person name="Huckle E.J."/>
            <person name="Hume J."/>
            <person name="Hunt P.J."/>
            <person name="Hunt A.R."/>
            <person name="Isherwood J."/>
            <person name="Jacob L."/>
            <person name="Johnson D."/>
            <person name="Jones S."/>
            <person name="de Jong P.J."/>
            <person name="Joseph S.S."/>
            <person name="Keenan S."/>
            <person name="Kelly S."/>
            <person name="Kershaw J.K."/>
            <person name="Khan Z."/>
            <person name="Kioschis P."/>
            <person name="Klages S."/>
            <person name="Knights A.J."/>
            <person name="Kosiura A."/>
            <person name="Kovar-Smith C."/>
            <person name="Laird G.K."/>
            <person name="Langford C."/>
            <person name="Lawlor S."/>
            <person name="Leversha M."/>
            <person name="Lewis L."/>
            <person name="Liu W."/>
            <person name="Lloyd C."/>
            <person name="Lloyd D.M."/>
            <person name="Loulseged H."/>
            <person name="Loveland J.E."/>
            <person name="Lovell J.D."/>
            <person name="Lozado R."/>
            <person name="Lu J."/>
            <person name="Lyne R."/>
            <person name="Ma J."/>
            <person name="Maheshwari M."/>
            <person name="Matthews L.H."/>
            <person name="McDowall J."/>
            <person name="McLaren S."/>
            <person name="McMurray A."/>
            <person name="Meidl P."/>
            <person name="Meitinger T."/>
            <person name="Milne S."/>
            <person name="Miner G."/>
            <person name="Mistry S.L."/>
            <person name="Morgan M."/>
            <person name="Morris S."/>
            <person name="Mueller I."/>
            <person name="Mullikin J.C."/>
            <person name="Nguyen N."/>
            <person name="Nordsiek G."/>
            <person name="Nyakatura G."/>
            <person name="O'dell C.N."/>
            <person name="Okwuonu G."/>
            <person name="Palmer S."/>
            <person name="Pandian R."/>
            <person name="Parker D."/>
            <person name="Parrish J."/>
            <person name="Pasternak S."/>
            <person name="Patel D."/>
            <person name="Pearce A.V."/>
            <person name="Pearson D.M."/>
            <person name="Pelan S.E."/>
            <person name="Perez L."/>
            <person name="Porter K.M."/>
            <person name="Ramsey Y."/>
            <person name="Reichwald K."/>
            <person name="Rhodes S."/>
            <person name="Ridler K.A."/>
            <person name="Schlessinger D."/>
            <person name="Schueler M.G."/>
            <person name="Sehra H.K."/>
            <person name="Shaw-Smith C."/>
            <person name="Shen H."/>
            <person name="Sheridan E.M."/>
            <person name="Shownkeen R."/>
            <person name="Skuce C.D."/>
            <person name="Smith M.L."/>
            <person name="Sotheran E.C."/>
            <person name="Steingruber H.E."/>
            <person name="Steward C.A."/>
            <person name="Storey R."/>
            <person name="Swann R.M."/>
            <person name="Swarbreck D."/>
            <person name="Tabor P.E."/>
            <person name="Taudien S."/>
            <person name="Taylor T."/>
            <person name="Teague B."/>
            <person name="Thomas K."/>
            <person name="Thorpe A."/>
            <person name="Timms K."/>
            <person name="Tracey A."/>
            <person name="Trevanion S."/>
            <person name="Tromans A.C."/>
            <person name="d'Urso M."/>
            <person name="Verduzco D."/>
            <person name="Villasana D."/>
            <person name="Waldron L."/>
            <person name="Wall M."/>
            <person name="Wang Q."/>
            <person name="Warren J."/>
            <person name="Warry G.L."/>
            <person name="Wei X."/>
            <person name="West A."/>
            <person name="Whitehead S.L."/>
            <person name="Whiteley M.N."/>
            <person name="Wilkinson J.E."/>
            <person name="Willey D.L."/>
            <person name="Williams G."/>
            <person name="Williams L."/>
            <person name="Williamson A."/>
            <person name="Williamson H."/>
            <person name="Wilming L."/>
            <person name="Woodmansey R.L."/>
            <person name="Wray P.W."/>
            <person name="Yen J."/>
            <person name="Zhang J."/>
            <person name="Zhou J."/>
            <person name="Zoghbi H."/>
            <person name="Zorilla S."/>
            <person name="Buck D."/>
            <person name="Reinhardt R."/>
            <person name="Poustka A."/>
            <person name="Rosenthal A."/>
            <person name="Lehrach H."/>
            <person name="Meindl A."/>
            <person name="Minx P.J."/>
            <person name="Hillier L.W."/>
            <person name="Willard H.F."/>
            <person name="Wilson R.K."/>
            <person name="Waterston R.H."/>
            <person name="Rice C.M."/>
            <person name="Vaudin M."/>
            <person name="Coulson A."/>
            <person name="Nelson D.L."/>
            <person name="Weinstock G."/>
            <person name="Sulston J.E."/>
            <person name="Durbin R.M."/>
            <person name="Hubbard T."/>
            <person name="Gibbs R.A."/>
            <person name="Beck S."/>
            <person name="Rogers J."/>
            <person name="Bentley D.R."/>
        </authorList>
    </citation>
    <scope>NUCLEOTIDE SEQUENCE [LARGE SCALE GENOMIC DNA]</scope>
</reference>
<reference key="2">
    <citation type="journal article" date="2004" name="Genome Res.">
        <title>The status, quality, and expansion of the NIH full-length cDNA project: the Mammalian Gene Collection (MGC).</title>
        <authorList>
            <consortium name="The MGC Project Team"/>
        </authorList>
    </citation>
    <scope>NUCLEOTIDE SEQUENCE [LARGE SCALE MRNA] (ISOFORM 2)</scope>
    <source>
        <tissue>Testis</tissue>
    </source>
</reference>
<reference key="3">
    <citation type="journal article" date="2002" name="Nature">
        <title>TREX is a conserved complex coupling transcription with messenger RNA export.</title>
        <authorList>
            <person name="Straesser K."/>
            <person name="Masuda S."/>
            <person name="Mason P."/>
            <person name="Pfannstiel J."/>
            <person name="Oppizzi M."/>
            <person name="Rodriguez-Navarro S."/>
            <person name="Rondon A.G."/>
            <person name="Aguilera A."/>
            <person name="Struhl K."/>
            <person name="Reed R."/>
            <person name="Hurt E."/>
        </authorList>
    </citation>
    <scope>NUCLEOTIDE SEQUENCE [MRNA] OF 233-1593 (ISOFORM 1)</scope>
    <scope>FUNCTION</scope>
    <scope>INTERACTION WITH THE TREX COMPLEX</scope>
</reference>
<reference key="4">
    <citation type="journal article" date="2004" name="Nat. Genet.">
        <title>Complete sequencing and characterization of 21,243 full-length human cDNAs.</title>
        <authorList>
            <person name="Ota T."/>
            <person name="Suzuki Y."/>
            <person name="Nishikawa T."/>
            <person name="Otsuki T."/>
            <person name="Sugiyama T."/>
            <person name="Irie R."/>
            <person name="Wakamatsu A."/>
            <person name="Hayashi K."/>
            <person name="Sato H."/>
            <person name="Nagai K."/>
            <person name="Kimura K."/>
            <person name="Makita H."/>
            <person name="Sekine M."/>
            <person name="Obayashi M."/>
            <person name="Nishi T."/>
            <person name="Shibahara T."/>
            <person name="Tanaka T."/>
            <person name="Ishii S."/>
            <person name="Yamamoto J."/>
            <person name="Saito K."/>
            <person name="Kawai Y."/>
            <person name="Isono Y."/>
            <person name="Nakamura Y."/>
            <person name="Nagahari K."/>
            <person name="Murakami K."/>
            <person name="Yasuda T."/>
            <person name="Iwayanagi T."/>
            <person name="Wagatsuma M."/>
            <person name="Shiratori A."/>
            <person name="Sudo H."/>
            <person name="Hosoiri T."/>
            <person name="Kaku Y."/>
            <person name="Kodaira H."/>
            <person name="Kondo H."/>
            <person name="Sugawara M."/>
            <person name="Takahashi M."/>
            <person name="Kanda K."/>
            <person name="Yokoi T."/>
            <person name="Furuya T."/>
            <person name="Kikkawa E."/>
            <person name="Omura Y."/>
            <person name="Abe K."/>
            <person name="Kamihara K."/>
            <person name="Katsuta N."/>
            <person name="Sato K."/>
            <person name="Tanikawa M."/>
            <person name="Yamazaki M."/>
            <person name="Ninomiya K."/>
            <person name="Ishibashi T."/>
            <person name="Yamashita H."/>
            <person name="Murakawa K."/>
            <person name="Fujimori K."/>
            <person name="Tanai H."/>
            <person name="Kimata M."/>
            <person name="Watanabe M."/>
            <person name="Hiraoka S."/>
            <person name="Chiba Y."/>
            <person name="Ishida S."/>
            <person name="Ono Y."/>
            <person name="Takiguchi S."/>
            <person name="Watanabe S."/>
            <person name="Yosida M."/>
            <person name="Hotuta T."/>
            <person name="Kusano J."/>
            <person name="Kanehori K."/>
            <person name="Takahashi-Fujii A."/>
            <person name="Hara H."/>
            <person name="Tanase T.-O."/>
            <person name="Nomura Y."/>
            <person name="Togiya S."/>
            <person name="Komai F."/>
            <person name="Hara R."/>
            <person name="Takeuchi K."/>
            <person name="Arita M."/>
            <person name="Imose N."/>
            <person name="Musashino K."/>
            <person name="Yuuki H."/>
            <person name="Oshima A."/>
            <person name="Sasaki N."/>
            <person name="Aotsuka S."/>
            <person name="Yoshikawa Y."/>
            <person name="Matsunawa H."/>
            <person name="Ichihara T."/>
            <person name="Shiohata N."/>
            <person name="Sano S."/>
            <person name="Moriya S."/>
            <person name="Momiyama H."/>
            <person name="Satoh N."/>
            <person name="Takami S."/>
            <person name="Terashima Y."/>
            <person name="Suzuki O."/>
            <person name="Nakagawa S."/>
            <person name="Senoh A."/>
            <person name="Mizoguchi H."/>
            <person name="Goto Y."/>
            <person name="Shimizu F."/>
            <person name="Wakebe H."/>
            <person name="Hishigaki H."/>
            <person name="Watanabe T."/>
            <person name="Sugiyama A."/>
            <person name="Takemoto M."/>
            <person name="Kawakami B."/>
            <person name="Yamazaki M."/>
            <person name="Watanabe K."/>
            <person name="Kumagai A."/>
            <person name="Itakura S."/>
            <person name="Fukuzumi Y."/>
            <person name="Fujimori Y."/>
            <person name="Komiyama M."/>
            <person name="Tashiro H."/>
            <person name="Tanigami A."/>
            <person name="Fujiwara T."/>
            <person name="Ono T."/>
            <person name="Yamada K."/>
            <person name="Fujii Y."/>
            <person name="Ozaki K."/>
            <person name="Hirao M."/>
            <person name="Ohmori Y."/>
            <person name="Kawabata A."/>
            <person name="Hikiji T."/>
            <person name="Kobatake N."/>
            <person name="Inagaki H."/>
            <person name="Ikema Y."/>
            <person name="Okamoto S."/>
            <person name="Okitani R."/>
            <person name="Kawakami T."/>
            <person name="Noguchi S."/>
            <person name="Itoh T."/>
            <person name="Shigeta K."/>
            <person name="Senba T."/>
            <person name="Matsumura K."/>
            <person name="Nakajima Y."/>
            <person name="Mizuno T."/>
            <person name="Morinaga M."/>
            <person name="Sasaki M."/>
            <person name="Togashi T."/>
            <person name="Oyama M."/>
            <person name="Hata H."/>
            <person name="Watanabe M."/>
            <person name="Komatsu T."/>
            <person name="Mizushima-Sugano J."/>
            <person name="Satoh T."/>
            <person name="Shirai Y."/>
            <person name="Takahashi Y."/>
            <person name="Nakagawa K."/>
            <person name="Okumura K."/>
            <person name="Nagase T."/>
            <person name="Nomura N."/>
            <person name="Kikuchi H."/>
            <person name="Masuho Y."/>
            <person name="Yamashita R."/>
            <person name="Nakai K."/>
            <person name="Yada T."/>
            <person name="Nakamura Y."/>
            <person name="Ohara O."/>
            <person name="Isogai T."/>
            <person name="Sugano S."/>
        </authorList>
    </citation>
    <scope>NUCLEOTIDE SEQUENCE [LARGE SCALE MRNA] OF 559-1277 (ISOFORM 1)</scope>
    <source>
        <tissue>Placenta</tissue>
    </source>
</reference>
<reference key="5">
    <citation type="journal article" date="2007" name="BMC Genomics">
        <title>The full-ORF clone resource of the German cDNA consortium.</title>
        <authorList>
            <person name="Bechtel S."/>
            <person name="Rosenfelder H."/>
            <person name="Duda A."/>
            <person name="Schmidt C.P."/>
            <person name="Ernst U."/>
            <person name="Wellenreuther R."/>
            <person name="Mehrle A."/>
            <person name="Schuster C."/>
            <person name="Bahr A."/>
            <person name="Bloecker H."/>
            <person name="Heubner D."/>
            <person name="Hoerlein A."/>
            <person name="Michel G."/>
            <person name="Wedler H."/>
            <person name="Koehrer K."/>
            <person name="Ottenwaelder B."/>
            <person name="Poustka A."/>
            <person name="Wiemann S."/>
            <person name="Schupp I."/>
        </authorList>
    </citation>
    <scope>NUCLEOTIDE SEQUENCE [LARGE SCALE MRNA] OF 1266-1593 (ISOFORM 1)</scope>
    <source>
        <tissue>Salivary gland</tissue>
    </source>
</reference>
<reference key="6">
    <citation type="journal article" date="2005" name="Cancer Res.">
        <title>Linking transcriptional elongation and messenger RNA export to metastatic breast cancers.</title>
        <authorList>
            <person name="Guo S."/>
            <person name="Hakimi M.A."/>
            <person name="Baillat D."/>
            <person name="Chen X."/>
            <person name="Farber M.J."/>
            <person name="Klein-Szanto A.J."/>
            <person name="Cooch N.S."/>
            <person name="Godwin A.K."/>
            <person name="Shiekhattar R."/>
        </authorList>
    </citation>
    <scope>IDENTIFICATION IN THE TREX COMPLEX</scope>
    <scope>FUNCTION OF THE TREX COMPLEX</scope>
    <scope>IDENTIFICATION BY MASS SPECTROMETRY</scope>
</reference>
<reference key="7">
    <citation type="journal article" date="2005" name="Genes Dev.">
        <title>Recruitment of the human TREX complex to mRNA during splicing.</title>
        <authorList>
            <person name="Masuda S."/>
            <person name="Das R."/>
            <person name="Cheng H."/>
            <person name="Hurt E."/>
            <person name="Dorman N."/>
            <person name="Reed R."/>
        </authorList>
    </citation>
    <scope>IDENTIFICATION IN THE THO AND TREX COMPLEX</scope>
    <scope>FUNCTION OF THE TREX COMPLEX</scope>
    <scope>IDENTIFICATION BY MASS SPECTROMETRY</scope>
</reference>
<reference key="8">
    <citation type="journal article" date="2005" name="Mol. Cell. Biol.">
        <title>Human hHpr1/p84/Thoc1 regulates transcriptional elongation and physically links RNA polymerase II and RNA processing factors.</title>
        <authorList>
            <person name="Li Y."/>
            <person name="Wang X."/>
            <person name="Zhang X."/>
            <person name="Goodrich D.W."/>
        </authorList>
    </citation>
    <scope>INTERACTION WITH THOC1</scope>
</reference>
<reference key="9">
    <citation type="journal article" date="2006" name="Cell">
        <title>Human mRNA export machinery recruited to the 5' end of mRNA.</title>
        <authorList>
            <person name="Cheng H."/>
            <person name="Dufu K."/>
            <person name="Lee C.-S."/>
            <person name="Hsu J.L."/>
            <person name="Dias A."/>
            <person name="Reed R."/>
        </authorList>
    </citation>
    <scope>FUNCTION OF THE TREX COMPLEX</scope>
</reference>
<reference key="10">
    <citation type="journal article" date="2006" name="Cell">
        <title>Global, in vivo, and site-specific phosphorylation dynamics in signaling networks.</title>
        <authorList>
            <person name="Olsen J.V."/>
            <person name="Blagoev B."/>
            <person name="Gnad F."/>
            <person name="Macek B."/>
            <person name="Kumar C."/>
            <person name="Mortensen P."/>
            <person name="Mann M."/>
        </authorList>
    </citation>
    <scope>PHOSPHORYLATION [LARGE SCALE ANALYSIS] AT SER-1486</scope>
    <scope>IDENTIFICATION BY MASS SPECTROMETRY [LARGE SCALE ANALYSIS]</scope>
    <source>
        <tissue>Cervix carcinoma</tissue>
    </source>
</reference>
<reference key="11">
    <citation type="journal article" date="2008" name="PLoS Pathog.">
        <title>Recruitment of the complete hTREX complex is required for Kaposi's sarcoma-associated herpesvirus intronless mRNA nuclear export and virus replication.</title>
        <authorList>
            <person name="Boyne J.R."/>
            <person name="Colgan K.J."/>
            <person name="Whitehouse A."/>
        </authorList>
    </citation>
    <scope>FUNCTION OF THE TREX COMPLEX (MICROBIAL INFECTION)</scope>
</reference>
<reference key="12">
    <citation type="journal article" date="2008" name="Proc. Natl. Acad. Sci. U.S.A.">
        <title>A quantitative atlas of mitotic phosphorylation.</title>
        <authorList>
            <person name="Dephoure N."/>
            <person name="Zhou C."/>
            <person name="Villen J."/>
            <person name="Beausoleil S.A."/>
            <person name="Bakalarski C.E."/>
            <person name="Elledge S.J."/>
            <person name="Gygi S.P."/>
        </authorList>
    </citation>
    <scope>PHOSPHORYLATION [LARGE SCALE ANALYSIS] AT THR-1385; SER-1393; SER-1417; THR-1443 AND SER-1486</scope>
    <scope>IDENTIFICATION BY MASS SPECTROMETRY [LARGE SCALE ANALYSIS]</scope>
    <source>
        <tissue>Cervix carcinoma</tissue>
    </source>
</reference>
<reference key="13">
    <citation type="journal article" date="2009" name="Anal. Chem.">
        <title>Lys-N and trypsin cover complementary parts of the phosphoproteome in a refined SCX-based approach.</title>
        <authorList>
            <person name="Gauci S."/>
            <person name="Helbig A.O."/>
            <person name="Slijper M."/>
            <person name="Krijgsveld J."/>
            <person name="Heck A.J."/>
            <person name="Mohammed S."/>
        </authorList>
    </citation>
    <scope>IDENTIFICATION BY MASS SPECTROMETRY [LARGE SCALE ANALYSIS]</scope>
</reference>
<reference key="14">
    <citation type="journal article" date="2010" name="Sci. Signal.">
        <title>Quantitative phosphoproteomics reveals widespread full phosphorylation site occupancy during mitosis.</title>
        <authorList>
            <person name="Olsen J.V."/>
            <person name="Vermeulen M."/>
            <person name="Santamaria A."/>
            <person name="Kumar C."/>
            <person name="Miller M.L."/>
            <person name="Jensen L.J."/>
            <person name="Gnad F."/>
            <person name="Cox J."/>
            <person name="Jensen T.S."/>
            <person name="Nigg E.A."/>
            <person name="Brunak S."/>
            <person name="Mann M."/>
        </authorList>
    </citation>
    <scope>PHOSPHORYLATION [LARGE SCALE ANALYSIS] AT THR-1385; SER-1393 AND SER-1417</scope>
    <scope>IDENTIFICATION BY MASS SPECTROMETRY [LARGE SCALE ANALYSIS]</scope>
    <source>
        <tissue>Cervix carcinoma</tissue>
    </source>
</reference>
<reference key="15">
    <citation type="journal article" date="2011" name="BMC Syst. Biol.">
        <title>Initial characterization of the human central proteome.</title>
        <authorList>
            <person name="Burkard T.R."/>
            <person name="Planyavsky M."/>
            <person name="Kaupe I."/>
            <person name="Breitwieser F.P."/>
            <person name="Buerckstuemmer T."/>
            <person name="Bennett K.L."/>
            <person name="Superti-Furga G."/>
            <person name="Colinge J."/>
        </authorList>
    </citation>
    <scope>IDENTIFICATION BY MASS SPECTROMETRY [LARGE SCALE ANALYSIS]</scope>
</reference>
<reference key="16">
    <citation type="journal article" date="2011" name="Sci. Signal.">
        <title>System-wide temporal characterization of the proteome and phosphoproteome of human embryonic stem cell differentiation.</title>
        <authorList>
            <person name="Rigbolt K.T."/>
            <person name="Prokhorova T.A."/>
            <person name="Akimov V."/>
            <person name="Henningsen J."/>
            <person name="Johansen P.T."/>
            <person name="Kratchmarova I."/>
            <person name="Kassem M."/>
            <person name="Mann M."/>
            <person name="Olsen J.V."/>
            <person name="Blagoev B."/>
        </authorList>
    </citation>
    <scope>PHOSPHORYLATION [LARGE SCALE ANALYSIS] AT SER-1417 AND SER-1486</scope>
    <scope>IDENTIFICATION BY MASS SPECTROMETRY [LARGE SCALE ANALYSIS]</scope>
</reference>
<reference key="17">
    <citation type="journal article" date="2012" name="Nat. Commun.">
        <title>TREX exposes the RNA-binding domain of Nxf1 to enable mRNA export.</title>
        <authorList>
            <person name="Viphakone N."/>
            <person name="Hautbergue G.M."/>
            <person name="Walsh M."/>
            <person name="Chang C.T."/>
            <person name="Holland A."/>
            <person name="Folco E.G."/>
            <person name="Reed R."/>
            <person name="Wilson S.A."/>
        </authorList>
    </citation>
    <scope>FUNCTION</scope>
</reference>
<reference key="18">
    <citation type="journal article" date="2013" name="Nat. Commun.">
        <authorList>
            <person name="Viphakone N."/>
            <person name="Hautbergue G.M."/>
            <person name="Walsh M."/>
            <person name="Chang C.T."/>
            <person name="Holland A."/>
            <person name="Folco E.G."/>
            <person name="Reed R."/>
            <person name="Wilson S.A."/>
        </authorList>
    </citation>
    <scope>ERRATUM OF PUBMED:22893130</scope>
</reference>
<reference key="19">
    <citation type="journal article" date="2012" name="PLoS ONE">
        <title>The proteins PDIP3 and ZC11A associate with the human TREX complex in an ATP-dependent manner and function in mRNA export.</title>
        <authorList>
            <person name="Folco E.G."/>
            <person name="Lee C.S."/>
            <person name="Dufu K."/>
            <person name="Yamazaki T."/>
            <person name="Reed R."/>
        </authorList>
    </citation>
    <scope>INTERACTION WITH POLDIP3 AND ZC3H11A</scope>
</reference>
<reference key="20">
    <citation type="journal article" date="2013" name="J. Proteome Res.">
        <title>Toward a comprehensive characterization of a human cancer cell phosphoproteome.</title>
        <authorList>
            <person name="Zhou H."/>
            <person name="Di Palma S."/>
            <person name="Preisinger C."/>
            <person name="Peng M."/>
            <person name="Polat A.N."/>
            <person name="Heck A.J."/>
            <person name="Mohammed S."/>
        </authorList>
    </citation>
    <scope>PHOSPHORYLATION [LARGE SCALE ANALYSIS] AT THR-1385; SER-1390; SER-1393; SER-1417; THR-1443; SER-1450; SER-1486 AND SER-1516</scope>
    <scope>IDENTIFICATION BY MASS SPECTROMETRY [LARGE SCALE ANALYSIS]</scope>
    <source>
        <tissue>Cervix carcinoma</tissue>
        <tissue>Erythroleukemia</tissue>
    </source>
</reference>
<reference key="21">
    <citation type="journal article" date="2013" name="Nucleic Acids Res.">
        <title>Aly and THO are required for assembly of the human TREX complex and association of TREX components with the spliced mRNA.</title>
        <authorList>
            <person name="Chi B."/>
            <person name="Wang Q."/>
            <person name="Wu G."/>
            <person name="Tan M."/>
            <person name="Wang L."/>
            <person name="Shi M."/>
            <person name="Chang X."/>
            <person name="Cheng H."/>
        </authorList>
    </citation>
    <scope>FUNCTION</scope>
</reference>
<reference key="22">
    <citation type="journal article" date="2014" name="J. Proteomics">
        <title>An enzyme assisted RP-RPLC approach for in-depth analysis of human liver phosphoproteome.</title>
        <authorList>
            <person name="Bian Y."/>
            <person name="Song C."/>
            <person name="Cheng K."/>
            <person name="Dong M."/>
            <person name="Wang F."/>
            <person name="Huang J."/>
            <person name="Sun D."/>
            <person name="Wang L."/>
            <person name="Ye M."/>
            <person name="Zou H."/>
        </authorList>
    </citation>
    <scope>PHOSPHORYLATION [LARGE SCALE ANALYSIS] AT SER-1417</scope>
    <scope>IDENTIFICATION BY MASS SPECTROMETRY [LARGE SCALE ANALYSIS]</scope>
    <source>
        <tissue>Liver</tissue>
    </source>
</reference>
<reference evidence="23" key="23">
    <citation type="journal article" date="2020" name="Elife">
        <title>Structure of the human core transcription-export complex reveals a hub for multivalent interactions.</title>
        <authorList>
            <person name="Puehringer T."/>
            <person name="Hohmann U."/>
            <person name="Fin L."/>
            <person name="Pacheco-Fiallos B."/>
            <person name="Schellhaas U."/>
            <person name="Brennecke J."/>
            <person name="Plaschka C."/>
        </authorList>
    </citation>
    <scope>STRUCTURE BY ELECTRON MICROSCOPY (3.30 ANGSTROMS) OF IN THO-DDX39B COMPLEX</scope>
    <scope>FUNCTION</scope>
    <scope>SUBUNIT</scope>
    <scope>MUTAGENESIS OF 551-TYR--LYS-558 AND 589-LYS--ASN-592</scope>
</reference>
<reference evidence="24 25" key="24">
    <citation type="journal article" date="2023" name="Nature">
        <title>mRNA recognition and packaging by the human transcription-export complex.</title>
        <authorList>
            <person name="Pacheco-Fiallos B."/>
            <person name="Vorlander M.K."/>
            <person name="Riabov-Bassat D."/>
            <person name="Fin L."/>
            <person name="O'Reilly F.J."/>
            <person name="Ayala F.I."/>
            <person name="Schellhaas U."/>
            <person name="Rappsilber J."/>
            <person name="Plaschka C."/>
        </authorList>
    </citation>
    <scope>STRUCTURE BY ELECTRON MICROSCOPY (3.45 ANGSTROMS) OF 1-1593 IN TREX COMPLEX</scope>
    <scope>SUBUNIT</scope>
</reference>
<reference key="25">
    <citation type="journal article" date="2015" name="Am. J. Hum. Genet.">
        <title>THOC2 mutations implicate mRNA-export pathway in X-linked intellectual disability.</title>
        <authorList>
            <person name="Kumar R."/>
            <person name="Corbett M.A."/>
            <person name="van Bon B.W."/>
            <person name="Woenig J.A."/>
            <person name="Weir L."/>
            <person name="Douglas E."/>
            <person name="Friend K.L."/>
            <person name="Gardner A."/>
            <person name="Shaw M."/>
            <person name="Jolly L.A."/>
            <person name="Tan C."/>
            <person name="Hunter M.F."/>
            <person name="Hackett A."/>
            <person name="Field M."/>
            <person name="Palmer E.E."/>
            <person name="Leffler M."/>
            <person name="Rogers C."/>
            <person name="Boyle J."/>
            <person name="Bienek M."/>
            <person name="Jensen C."/>
            <person name="Van Buggenhout G."/>
            <person name="Van Esch H."/>
            <person name="Hoffmann K."/>
            <person name="Raynaud M."/>
            <person name="Zhao H."/>
            <person name="Reed R."/>
            <person name="Hu H."/>
            <person name="Haas S.A."/>
            <person name="Haan E."/>
            <person name="Kalscheuer V.M."/>
            <person name="Gecz J."/>
        </authorList>
    </citation>
    <scope>VARIANTS MRXSK PHE-313; PRO-438; THR-800 AND PRO-1012</scope>
    <scope>CHARACTERIZATION OF VARIANTS MRXSK PRO-438; THR-800 AND PRO-1012</scope>
    <scope>INVOLVEMENT IN MRXSK</scope>
    <scope>TISSUE SPECIFICITY</scope>
</reference>
<reference key="26">
    <citation type="journal article" date="2018" name="Hum. Mutat.">
        <title>Severe neurocognitive and growth disorders due to variation in THOC2, an essential component of nuclear mRNA export machinery.</title>
        <authorList>
            <consortium name="Broad CMG"/>
            <person name="Kumar R."/>
            <person name="Gardner A."/>
            <person name="Homan C.C."/>
            <person name="Douglas E."/>
            <person name="Mefford H."/>
            <person name="Wieczorek D."/>
            <person name="Luedecke H.J."/>
            <person name="Stark Z."/>
            <person name="Sadedin S."/>
            <person name="Nowak C.B."/>
            <person name="Douglas J."/>
            <person name="Parsons G."/>
            <person name="Mark P."/>
            <person name="Loidi L."/>
            <person name="Herman G.E."/>
            <person name="Mihalic Mosher T."/>
            <person name="Gillespie M.K."/>
            <person name="Brady L."/>
            <person name="Tarnopolsky M."/>
            <person name="Madrigal I."/>
            <person name="Eiris J."/>
            <person name="Domenech Salgado L."/>
            <person name="Rabionet R."/>
            <person name="Strom T.M."/>
            <person name="Ishihara N."/>
            <person name="Inagaki H."/>
            <person name="Kurahashi H."/>
            <person name="Dudding-Byth T."/>
            <person name="Palmer E.E."/>
            <person name="Field M."/>
            <person name="Gecz J."/>
        </authorList>
    </citation>
    <scope>VARIANTS MRXSK CYS-77; CYS-517; ILE-696; ASP-713; LEU-1108; GLY-1121; TYR-1187 AND HIS-1261</scope>
    <scope>CHARACTERIZATION OF VARIANTS MRXSK CYS-517; ILE-696; ASP-713 AND TYR-1187</scope>
    <scope>INVOLVEMENT IN MRXSK</scope>
    <scope>SUBCELLULAR LOCATION</scope>
</reference>
<reference key="27">
    <citation type="journal article" date="2020" name="Front. Mol. Neurosci.">
        <title>Expanding clinical presentations due to variations in THOC2 mRNA nuclear export factor.</title>
        <authorList>
            <person name="Kumar R."/>
            <person name="Palmer E."/>
            <person name="Gardner A.E."/>
            <person name="Carroll R."/>
            <person name="Banka S."/>
            <person name="Abdelhadi O."/>
            <person name="Donnai D."/>
            <person name="Elgersma Y."/>
            <person name="Curry C.J."/>
            <person name="Gardham A."/>
            <person name="Suri M."/>
            <person name="Malla R."/>
            <person name="Brady L.I."/>
            <person name="Tarnopolsky M."/>
            <person name="Azmanov D.N."/>
            <person name="Atkinson V."/>
            <person name="Black M."/>
            <person name="Baynam G."/>
            <person name="Dreyer L."/>
            <person name="Hayeems R.Z."/>
            <person name="Marshall C.R."/>
            <person name="Costain G."/>
            <person name="Wessels M.W."/>
            <person name="Baptista J."/>
            <person name="Drummond J."/>
            <person name="Leffler M."/>
            <person name="Field M."/>
            <person name="Gecz J."/>
        </authorList>
    </citation>
    <scope>VARIANTS MRXSK CYS-77; ASP-666; GLU-724; CYS-881; TYR-981; TRP-1075; CYS-1100 AND ARG-1549</scope>
    <scope>CHARACTERIZATION OF VARIANTS MRXSK CYS-77; ASP-666 AND CYS-881</scope>
    <scope>INVOLVEMENT IN MRXSK</scope>
</reference>
<reference key="28">
    <citation type="journal article" date="2021" name="Cureus">
        <title>Novel consensus splice site pathogenic variation in THOC2 gene leads to recurrent arthrogryposis multiplex congenita phenotype: A case report.</title>
        <authorList>
            <person name="Tamhankar V."/>
            <person name="Tamhankar P."/>
            <person name="Chaubal R."/>
            <person name="Chaubal J."/>
            <person name="Chaubal N."/>
        </authorList>
    </citation>
    <scope>INVOLVEMENT IN AMC7</scope>
</reference>
<reference key="29">
    <citation type="journal article" date="2023" name="Neuromuscul. Disord.">
        <title>Muscular phenotype description of abnormal THOC2 splicing.</title>
        <authorList>
            <person name="Dubucs C."/>
            <person name="Rendu J."/>
            <person name="Michel-Calemard L."/>
            <person name="Menassa R."/>
            <person name="Langeois M."/>
            <person name="Nicaise Y."/>
            <person name="Ousselin J."/>
            <person name="Aziza J."/>
            <person name="Uro-Coste E."/>
        </authorList>
    </citation>
    <scope>INVOLVEMENT IN AMC7</scope>
</reference>
<comment type="function">
    <text evidence="4 5 7 8 10 12 16">Component of the THO subcomplex of the TREX complex which is thought to couple mRNA transcription, processing and nuclear export, and which specifically associates with spliced mRNA and not with unspliced pre-mRNA (PubMed:15833825, PubMed:15998806, PubMed:17190602). Required for efficient export of polyadenylated RNA and spliced mRNA (PubMed:23222130). The THOC1-THOC2-THOC3 core complex alone is sufficient to bind export factor NXF1-NXT1 and promote ATPase activity of DDX39B; in the complex THOC2 is the only component that directly interacts with DDX39B (PubMed:33191911). TREX is recruited to spliced mRNAs by a transcription-independent mechanism, binds to mRNA upstream of the exon-junction complex (EJC) and is recruited in a splicing- and cap-dependent manner to a region near the 5' end of the mRNA where it functions in mRNA export to the cytoplasm via the TAP/NXF1 pathway (PubMed:15833825, PubMed:15998806, PubMed:17190602). Required for NXF1 localization to the nuclear rim (PubMed:22893130). THOC2 (and probably the THO complex) is involved in releasing mRNA from nuclear speckle domains.</text>
</comment>
<comment type="function">
    <text evidence="9">(Microbial infection) The TREX complex is essential for the export of Kaposi's sarcoma-associated herpesvirus (KSHV) intronless mRNAs and infectious virus production.</text>
</comment>
<comment type="subunit">
    <text evidence="4 5 6 7 11 12 16 18">Component of the THO subcomplex, which is composed of THOC1, THOC2, THOC3, THOC5, THOC6 and THOC7 (PubMed:33191911, PubMed:37020021). The THO subcomplex interacts with DDX39B to form the THO-DDX39B complex which multimerizes into a 28-subunit tetrameric assembly (PubMed:33191911, PubMed:37020021). Component of the transcription/export (TREX) complex at least composed of ALYREF/THOC4, DDX39B, SARNP/CIP29, CHTOP and the THO subcomplex; in the complex interacts with THOC1, THOC3, THOC5, THOC7 and DDX39B (PubMed:33191911, PubMed:37020021). TREX seems to have a dynamic structure involving ATP-dependent remodeling (PubMed:23222130, PubMed:37020021). Interacts with POLDIP3 and ZC3H11A.</text>
</comment>
<comment type="subcellular location">
    <subcellularLocation>
        <location evidence="14">Nucleus</location>
    </subcellularLocation>
    <subcellularLocation>
        <location evidence="22">Nucleus speckle</location>
    </subcellularLocation>
    <subcellularLocation>
        <location evidence="14">Cytoplasm</location>
    </subcellularLocation>
</comment>
<comment type="alternative products">
    <event type="alternative splicing"/>
    <isoform>
        <id>Q8NI27-1</id>
        <name>1</name>
        <sequence type="displayed"/>
    </isoform>
    <isoform>
        <id>Q8NI27-2</id>
        <name>2</name>
        <sequence type="described" ref="VSP_008588"/>
    </isoform>
</comment>
<comment type="tissue specificity">
    <text evidence="13">Expressed in the hippocampus and the cerebral cortex.</text>
</comment>
<comment type="disease" evidence="13 14 15">
    <disease id="DI-04511">
        <name>Intellectual developmental disorder, X-linked, syndromic, Kumar type</name>
        <acronym>MRXSK</acronym>
        <description>A form of intellectual disability, a disorder characterized by significantly below average general intellectual functioning associated with impairments in adaptive behavior and manifested during the developmental period. Intellectual deficiency is the only primary symptom of non-syndromic X-linked forms, while syndromic forms present with associated physical, neurological and/or psychiatric manifestations. MRXSK patients manifest variable degrees of intellectual disability. Commonly observed features included speech delay, elevated BMI, short stature, seizure disorders, gait disturbance, and tremors.</description>
        <dbReference type="MIM" id="300957"/>
    </disease>
    <text>The disease is caused by variants affecting the gene represented in this entry.</text>
</comment>
<comment type="disease" evidence="17 19">
    <disease id="DI-06952">
        <name>Arthrogryposis multiplex congenita 7, X-linked</name>
        <acronym>AMC7</acronym>
        <description>A form of arthrogryposis multiplex congenita, a developmental condition characterized by multiple joint contractures resulting from reduced or absent fetal movements. AMC7 is an X-linked recessive, severe form with onset in utero. Affected fetuses may also have subcutaneous edema and dysmorphic facial features.</description>
        <dbReference type="MIM" id="301127"/>
    </disease>
    <text>The disease is caused by variants affecting the gene represented in this entry.</text>
</comment>
<comment type="similarity">
    <text evidence="22">Belongs to the THOC2 family.</text>
</comment>
<comment type="sequence caution" evidence="22">
    <conflict type="miscellaneous discrepancy">
        <sequence resource="EMBL-CDS" id="AAM28436"/>
    </conflict>
    <text>Contaminating sequence. Sequence of unknown origin in the N-terminal part.</text>
</comment>
<comment type="sequence caution" evidence="22">
    <conflict type="erroneous initiation">
        <sequence resource="EMBL-CDS" id="BAB14630"/>
    </conflict>
    <text>Truncated N-terminus.</text>
</comment>
<protein>
    <recommendedName>
        <fullName evidence="21">THO complex subunit 2</fullName>
        <shortName>Tho2</shortName>
    </recommendedName>
    <alternativeName>
        <fullName>hTREX120</fullName>
    </alternativeName>
</protein>
<proteinExistence type="evidence at protein level"/>
<evidence type="ECO:0000250" key="1">
    <source>
        <dbReference type="UniProtKB" id="B1AZI6"/>
    </source>
</evidence>
<evidence type="ECO:0000255" key="2"/>
<evidence type="ECO:0000256" key="3">
    <source>
        <dbReference type="SAM" id="MobiDB-lite"/>
    </source>
</evidence>
<evidence type="ECO:0000269" key="4">
    <source>
    </source>
</evidence>
<evidence type="ECO:0000269" key="5">
    <source>
    </source>
</evidence>
<evidence type="ECO:0000269" key="6">
    <source>
    </source>
</evidence>
<evidence type="ECO:0000269" key="7">
    <source>
    </source>
</evidence>
<evidence type="ECO:0000269" key="8">
    <source>
    </source>
</evidence>
<evidence type="ECO:0000269" key="9">
    <source>
    </source>
</evidence>
<evidence type="ECO:0000269" key="10">
    <source>
    </source>
</evidence>
<evidence type="ECO:0000269" key="11">
    <source>
    </source>
</evidence>
<evidence type="ECO:0000269" key="12">
    <source>
    </source>
</evidence>
<evidence type="ECO:0000269" key="13">
    <source>
    </source>
</evidence>
<evidence type="ECO:0000269" key="14">
    <source>
    </source>
</evidence>
<evidence type="ECO:0000269" key="15">
    <source>
    </source>
</evidence>
<evidence type="ECO:0000269" key="16">
    <source>
    </source>
</evidence>
<evidence type="ECO:0000269" key="17">
    <source>
    </source>
</evidence>
<evidence type="ECO:0000269" key="18">
    <source>
    </source>
</evidence>
<evidence type="ECO:0000269" key="19">
    <source>
    </source>
</evidence>
<evidence type="ECO:0000303" key="20">
    <source>
    </source>
</evidence>
<evidence type="ECO:0000303" key="21">
    <source>
    </source>
</evidence>
<evidence type="ECO:0000305" key="22"/>
<evidence type="ECO:0007744" key="23">
    <source>
        <dbReference type="PDB" id="7APK"/>
    </source>
</evidence>
<evidence type="ECO:0007744" key="24">
    <source>
        <dbReference type="PDB" id="7ZNK"/>
    </source>
</evidence>
<evidence type="ECO:0007744" key="25">
    <source>
        <dbReference type="PDB" id="7ZNL"/>
    </source>
</evidence>
<evidence type="ECO:0007744" key="26">
    <source>
    </source>
</evidence>
<evidence type="ECO:0007744" key="27">
    <source>
    </source>
</evidence>
<evidence type="ECO:0007744" key="28">
    <source>
    </source>
</evidence>
<evidence type="ECO:0007744" key="29">
    <source>
    </source>
</evidence>
<evidence type="ECO:0007744" key="30">
    <source>
    </source>
</evidence>
<evidence type="ECO:0007744" key="31">
    <source>
    </source>
</evidence>
<evidence type="ECO:0007829" key="32">
    <source>
        <dbReference type="PDB" id="7APK"/>
    </source>
</evidence>
<evidence type="ECO:0007829" key="33">
    <source>
        <dbReference type="PDB" id="7ZNL"/>
    </source>
</evidence>